<sequence length="198" mass="22436">MRLSSTNMQARKMLFAAILSICASSSKKISIYNEEMIVALCFIGFIIFSWKSLGKTFKVTLDGRIQAIQEESQQFPNPNEVVPPESNEQQRLLRISLRICGTVVESLPMARCAPKCEKTVQALLCRNLNVKSATLPNATSSRRIRLQDDIAIKMHVLVGKRFCPWCSSKAERVEFIRESLVVLRMVWVGDSLKNKELE</sequence>
<feature type="chain" id="PRO_0000096476" description="ATP synthase protein MI25">
    <location>
        <begin position="1"/>
        <end position="198"/>
    </location>
</feature>
<feature type="transmembrane region" description="Helical" evidence="2">
    <location>
        <begin position="29"/>
        <end position="49"/>
    </location>
</feature>
<comment type="function">
    <text evidence="1">This is one of the chains of the nonenzymatic component (CF(0) subunit) of the mitochondrial ATPase complex.</text>
</comment>
<comment type="subunit">
    <text evidence="1">F-type ATPases have 2 components, CF(1) - the catalytic core - and CF(0) - the membrane proton channel. CF(1) has five subunits: alpha(3), beta(3), gamma(1), delta(1), epsilon(1). CF(0) has three main subunits: a, b and c (By similarity).</text>
</comment>
<comment type="subcellular location">
    <subcellularLocation>
        <location evidence="1">Mitochondrion membrane</location>
        <topology evidence="1">Single-pass membrane protein</topology>
    </subcellularLocation>
</comment>
<comment type="RNA editing">
    <location>
        <position position="50"/>
    </location>
    <location>
        <position position="165"/>
    </location>
    <location>
        <position position="187"/>
    </location>
</comment>
<comment type="similarity">
    <text evidence="3">Belongs to the ATPase protein MI25 family.</text>
</comment>
<dbReference type="EMBL" id="X06310">
    <property type="protein sequence ID" value="CAA29629.1"/>
    <property type="status" value="ALT_SEQ"/>
    <property type="molecule type" value="Genomic_DNA"/>
</dbReference>
<dbReference type="PIR" id="S01445">
    <property type="entry name" value="S01445"/>
</dbReference>
<dbReference type="RefSeq" id="YP_173388.1">
    <property type="nucleotide sequence ID" value="NC_006581.1"/>
</dbReference>
<dbReference type="SMR" id="P09003"/>
<dbReference type="GeneID" id="3205236"/>
<dbReference type="KEGG" id="nta:3205236"/>
<dbReference type="OrthoDB" id="1924059at2759"/>
<dbReference type="Proteomes" id="UP000084051">
    <property type="component" value="Mitochondrion MT"/>
</dbReference>
<dbReference type="GO" id="GO:0031966">
    <property type="term" value="C:mitochondrial membrane"/>
    <property type="evidence" value="ECO:0007669"/>
    <property type="project" value="UniProtKB-SubCell"/>
</dbReference>
<dbReference type="GO" id="GO:0045259">
    <property type="term" value="C:proton-transporting ATP synthase complex"/>
    <property type="evidence" value="ECO:0007669"/>
    <property type="project" value="UniProtKB-KW"/>
</dbReference>
<dbReference type="GO" id="GO:0015078">
    <property type="term" value="F:proton transmembrane transporter activity"/>
    <property type="evidence" value="ECO:0007669"/>
    <property type="project" value="InterPro"/>
</dbReference>
<dbReference type="GO" id="GO:0015986">
    <property type="term" value="P:proton motive force-driven ATP synthesis"/>
    <property type="evidence" value="ECO:0007669"/>
    <property type="project" value="InterPro"/>
</dbReference>
<dbReference type="InterPro" id="IPR008688">
    <property type="entry name" value="ATP_synth_Bsub_B/MI25"/>
</dbReference>
<dbReference type="InterPro" id="IPR044988">
    <property type="entry name" value="MI25_plants"/>
</dbReference>
<dbReference type="PANTHER" id="PTHR37774:SF4">
    <property type="entry name" value="ATP SYNTHASE PROTEIN MI25"/>
    <property type="match status" value="1"/>
</dbReference>
<dbReference type="PANTHER" id="PTHR37774">
    <property type="entry name" value="ATP SYNTHASE PROTEIN MI25-RELATED"/>
    <property type="match status" value="1"/>
</dbReference>
<dbReference type="Pfam" id="PF05405">
    <property type="entry name" value="Mt_ATP-synt_B"/>
    <property type="match status" value="1"/>
</dbReference>
<evidence type="ECO:0000250" key="1"/>
<evidence type="ECO:0000255" key="2"/>
<evidence type="ECO:0000305" key="3"/>
<accession>P09003</accession>
<name>MI25_TOBAC</name>
<geneLocation type="mitochondrion"/>
<keyword id="KW-0066">ATP synthesis</keyword>
<keyword id="KW-0138">CF(0)</keyword>
<keyword id="KW-0375">Hydrogen ion transport</keyword>
<keyword id="KW-0406">Ion transport</keyword>
<keyword id="KW-0472">Membrane</keyword>
<keyword id="KW-0496">Mitochondrion</keyword>
<keyword id="KW-1185">Reference proteome</keyword>
<keyword id="KW-0691">RNA editing</keyword>
<keyword id="KW-0812">Transmembrane</keyword>
<keyword id="KW-1133">Transmembrane helix</keyword>
<keyword id="KW-0813">Transport</keyword>
<proteinExistence type="evidence at transcript level"/>
<organism>
    <name type="scientific">Nicotiana tabacum</name>
    <name type="common">Common tobacco</name>
    <dbReference type="NCBI Taxonomy" id="4097"/>
    <lineage>
        <taxon>Eukaryota</taxon>
        <taxon>Viridiplantae</taxon>
        <taxon>Streptophyta</taxon>
        <taxon>Embryophyta</taxon>
        <taxon>Tracheophyta</taxon>
        <taxon>Spermatophyta</taxon>
        <taxon>Magnoliopsida</taxon>
        <taxon>eudicotyledons</taxon>
        <taxon>Gunneridae</taxon>
        <taxon>Pentapetalae</taxon>
        <taxon>asterids</taxon>
        <taxon>lamiids</taxon>
        <taxon>Solanales</taxon>
        <taxon>Solanaceae</taxon>
        <taxon>Nicotianoideae</taxon>
        <taxon>Nicotianeae</taxon>
        <taxon>Nicotiana</taxon>
    </lineage>
</organism>
<reference key="1">
    <citation type="journal article" date="1987" name="Curr. Genet.">
        <title>Characterization of the gene urf13-T and an unidentified reading frame, ORF 25, in maize and tobacco mitochondria.</title>
        <authorList>
            <person name="Stamper S.E."/>
            <person name="Dewey R.E."/>
            <person name="Bland M.M."/>
            <person name="Levings C.S. III"/>
        </authorList>
    </citation>
    <scope>NUCLEOTIDE SEQUENCE [GENOMIC DNA]</scope>
    <source>
        <strain>cv. Coker 139</strain>
    </source>
</reference>
<protein>
    <recommendedName>
        <fullName>ATP synthase protein MI25</fullName>
    </recommendedName>
    <alternativeName>
        <fullName>ORF 25</fullName>
    </alternativeName>
</protein>